<keyword id="KW-0025">Alternative splicing</keyword>
<keyword id="KW-0238">DNA-binding</keyword>
<keyword id="KW-0539">Nucleus</keyword>
<keyword id="KW-1185">Reference proteome</keyword>
<gene>
    <name type="primary">Tigd5</name>
</gene>
<evidence type="ECO:0000250" key="1"/>
<evidence type="ECO:0000255" key="2"/>
<evidence type="ECO:0000255" key="3">
    <source>
        <dbReference type="PROSITE-ProRule" id="PRU00320"/>
    </source>
</evidence>
<evidence type="ECO:0000255" key="4">
    <source>
        <dbReference type="PROSITE-ProRule" id="PRU00583"/>
    </source>
</evidence>
<evidence type="ECO:0000256" key="5">
    <source>
        <dbReference type="SAM" id="MobiDB-lite"/>
    </source>
</evidence>
<evidence type="ECO:0000303" key="6">
    <source>
    </source>
</evidence>
<evidence type="ECO:0000305" key="7"/>
<comment type="subcellular location">
    <subcellularLocation>
        <location evidence="7">Nucleus</location>
    </subcellularLocation>
</comment>
<comment type="alternative products">
    <event type="alternative splicing"/>
    <isoform>
        <id>Q499M4-1</id>
        <name>1</name>
        <sequence type="displayed"/>
    </isoform>
    <isoform>
        <id>Q499M4-2</id>
        <name>2</name>
        <sequence type="described" ref="VSP_042797"/>
    </isoform>
</comment>
<comment type="similarity">
    <text evidence="7">Belongs to the tigger transposable element derived protein family.</text>
</comment>
<comment type="sequence caution" evidence="7">
    <conflict type="frameshift">
        <sequence resource="EMBL-CDS" id="BAC29359"/>
    </conflict>
</comment>
<comment type="sequence caution" evidence="7">
    <conflict type="frameshift">
        <sequence resource="EMBL-CDS" id="BAC39713"/>
    </conflict>
</comment>
<protein>
    <recommendedName>
        <fullName>Tigger transposable element derived 5</fullName>
    </recommendedName>
</protein>
<feature type="chain" id="PRO_0000416768" description="Tigger transposable element derived 5">
    <location>
        <begin position="1"/>
        <end position="642"/>
    </location>
</feature>
<feature type="domain" description="HTH psq-type" evidence="3">
    <location>
        <begin position="57"/>
        <end position="108"/>
    </location>
</feature>
<feature type="domain" description="HTH CENPB-type" evidence="4">
    <location>
        <begin position="122"/>
        <end position="195"/>
    </location>
</feature>
<feature type="domain" description="DDE-1" evidence="2">
    <location>
        <begin position="240"/>
        <end position="365"/>
    </location>
</feature>
<feature type="DNA-binding region" description="H-T-H motif" evidence="1">
    <location>
        <begin position="84"/>
        <end position="104"/>
    </location>
</feature>
<feature type="DNA-binding region" description="H-T-H motif" evidence="1">
    <location>
        <begin position="155"/>
        <end position="188"/>
    </location>
</feature>
<feature type="region of interest" description="Disordered" evidence="5">
    <location>
        <begin position="1"/>
        <end position="54"/>
    </location>
</feature>
<feature type="region of interest" description="Disordered" evidence="5">
    <location>
        <begin position="202"/>
        <end position="238"/>
    </location>
</feature>
<feature type="region of interest" description="Disordered" evidence="5">
    <location>
        <begin position="375"/>
        <end position="400"/>
    </location>
</feature>
<feature type="region of interest" description="Disordered" evidence="5">
    <location>
        <begin position="548"/>
        <end position="581"/>
    </location>
</feature>
<feature type="compositionally biased region" description="Pro residues" evidence="5">
    <location>
        <begin position="31"/>
        <end position="53"/>
    </location>
</feature>
<feature type="splice variant" id="VSP_042797" description="In isoform 2." evidence="6">
    <original>SRAHIPAPLEHGVVAAFKHLYKRELLRLAVSCASGSPLDFMRSFVLKDMLYLAGLSWDLVQAGSIERCWLLGLRAAFEPGQQPAHQVEETAEHSRVLSDLTHLAALAYKRLAPEEVAQWLHLDDDGGLPEGCREEVAPAAPPSPASLPSSIGAGEEEEEATEQGGVLVPTAGEAVWGLETALRWLESQDPREVGPLRLVQLRSLITMARRLGGIGPSAVTSDDGV</original>
    <variation>VGARRGGSLQAFVQTRAPAACCVLCQWLPSGLHEKLRSQGHAVPGWPLLGLGPGRQHRALLAAGSASSL</variation>
    <location>
        <begin position="418"/>
        <end position="642"/>
    </location>
</feature>
<feature type="sequence conflict" description="In Ref. 1; BAC29359." evidence="7" ref="1">
    <location>
        <position position="44"/>
    </location>
</feature>
<feature type="sequence conflict" description="In Ref. 1; BAC29359." evidence="7" ref="1">
    <original>H</original>
    <variation>R</variation>
    <location>
        <position position="436"/>
    </location>
</feature>
<sequence length="642" mass="70249">MYPASPPAGPALHPVPHRARLPQPRCLAEPPRSPAPGPGSTARPPPPPAPGPRPRVAVKMTFRKAYSIKDKLQAIERVKGGERQASVCRDFGVPGGTLRGWLKDEPKLRWFLDQLGGEVGTQRKKMRLANEEEIDRAVYSWFLTLRQHGVPLSGPVIQAQAEAFARQIYGPECTFKASHGWFWRWQKRHGISSQRIYGEAESPVAGPAPVKEEPAQSPGAVLVPDGAPATLPHSEGGYGDEQIYNANVTGLYWRLLPEQASTPGTGDSKEPGGCSRRWRSDRVTVLLAANLTGSHKLKPLVIGQLPDPPSLRHHNQDKFPASYRYSPDAWLSRPLLRGWFFEEFVPGVKRYLRRSCLQQKAVLLVAHPPCPSWATSMPPLEESEETPRQCQPELLGSPEELQTPDGAVRVLFLSKGTSRAHIPAPLEHGVVAAFKHLYKRELLRLAVSCASGSPLDFMRSFVLKDMLYLAGLSWDLVQAGSIERCWLLGLRAAFEPGQQPAHQVEETAEHSRVLSDLTHLAALAYKRLAPEEVAQWLHLDDDGGLPEGCREEVAPAAPPSPASLPSSIGAGEEEEEATEQGGVLVPTAGEAVWGLETALRWLESQDPREVGPLRLVQLRSLITMARRLGGIGPSAVTSDDGV</sequence>
<accession>Q499M4</accession>
<accession>Q8BQA1</accession>
<accession>Q8C381</accession>
<accession>Q8CBD5</accession>
<organism>
    <name type="scientific">Mus musculus</name>
    <name type="common">Mouse</name>
    <dbReference type="NCBI Taxonomy" id="10090"/>
    <lineage>
        <taxon>Eukaryota</taxon>
        <taxon>Metazoa</taxon>
        <taxon>Chordata</taxon>
        <taxon>Craniata</taxon>
        <taxon>Vertebrata</taxon>
        <taxon>Euteleostomi</taxon>
        <taxon>Mammalia</taxon>
        <taxon>Eutheria</taxon>
        <taxon>Euarchontoglires</taxon>
        <taxon>Glires</taxon>
        <taxon>Rodentia</taxon>
        <taxon>Myomorpha</taxon>
        <taxon>Muroidea</taxon>
        <taxon>Muridae</taxon>
        <taxon>Murinae</taxon>
        <taxon>Mus</taxon>
        <taxon>Mus</taxon>
    </lineage>
</organism>
<reference key="1">
    <citation type="journal article" date="2005" name="Science">
        <title>The transcriptional landscape of the mammalian genome.</title>
        <authorList>
            <person name="Carninci P."/>
            <person name="Kasukawa T."/>
            <person name="Katayama S."/>
            <person name="Gough J."/>
            <person name="Frith M.C."/>
            <person name="Maeda N."/>
            <person name="Oyama R."/>
            <person name="Ravasi T."/>
            <person name="Lenhard B."/>
            <person name="Wells C."/>
            <person name="Kodzius R."/>
            <person name="Shimokawa K."/>
            <person name="Bajic V.B."/>
            <person name="Brenner S.E."/>
            <person name="Batalov S."/>
            <person name="Forrest A.R."/>
            <person name="Zavolan M."/>
            <person name="Davis M.J."/>
            <person name="Wilming L.G."/>
            <person name="Aidinis V."/>
            <person name="Allen J.E."/>
            <person name="Ambesi-Impiombato A."/>
            <person name="Apweiler R."/>
            <person name="Aturaliya R.N."/>
            <person name="Bailey T.L."/>
            <person name="Bansal M."/>
            <person name="Baxter L."/>
            <person name="Beisel K.W."/>
            <person name="Bersano T."/>
            <person name="Bono H."/>
            <person name="Chalk A.M."/>
            <person name="Chiu K.P."/>
            <person name="Choudhary V."/>
            <person name="Christoffels A."/>
            <person name="Clutterbuck D.R."/>
            <person name="Crowe M.L."/>
            <person name="Dalla E."/>
            <person name="Dalrymple B.P."/>
            <person name="de Bono B."/>
            <person name="Della Gatta G."/>
            <person name="di Bernardo D."/>
            <person name="Down T."/>
            <person name="Engstrom P."/>
            <person name="Fagiolini M."/>
            <person name="Faulkner G."/>
            <person name="Fletcher C.F."/>
            <person name="Fukushima T."/>
            <person name="Furuno M."/>
            <person name="Futaki S."/>
            <person name="Gariboldi M."/>
            <person name="Georgii-Hemming P."/>
            <person name="Gingeras T.R."/>
            <person name="Gojobori T."/>
            <person name="Green R.E."/>
            <person name="Gustincich S."/>
            <person name="Harbers M."/>
            <person name="Hayashi Y."/>
            <person name="Hensch T.K."/>
            <person name="Hirokawa N."/>
            <person name="Hill D."/>
            <person name="Huminiecki L."/>
            <person name="Iacono M."/>
            <person name="Ikeo K."/>
            <person name="Iwama A."/>
            <person name="Ishikawa T."/>
            <person name="Jakt M."/>
            <person name="Kanapin A."/>
            <person name="Katoh M."/>
            <person name="Kawasawa Y."/>
            <person name="Kelso J."/>
            <person name="Kitamura H."/>
            <person name="Kitano H."/>
            <person name="Kollias G."/>
            <person name="Krishnan S.P."/>
            <person name="Kruger A."/>
            <person name="Kummerfeld S.K."/>
            <person name="Kurochkin I.V."/>
            <person name="Lareau L.F."/>
            <person name="Lazarevic D."/>
            <person name="Lipovich L."/>
            <person name="Liu J."/>
            <person name="Liuni S."/>
            <person name="McWilliam S."/>
            <person name="Madan Babu M."/>
            <person name="Madera M."/>
            <person name="Marchionni L."/>
            <person name="Matsuda H."/>
            <person name="Matsuzawa S."/>
            <person name="Miki H."/>
            <person name="Mignone F."/>
            <person name="Miyake S."/>
            <person name="Morris K."/>
            <person name="Mottagui-Tabar S."/>
            <person name="Mulder N."/>
            <person name="Nakano N."/>
            <person name="Nakauchi H."/>
            <person name="Ng P."/>
            <person name="Nilsson R."/>
            <person name="Nishiguchi S."/>
            <person name="Nishikawa S."/>
            <person name="Nori F."/>
            <person name="Ohara O."/>
            <person name="Okazaki Y."/>
            <person name="Orlando V."/>
            <person name="Pang K.C."/>
            <person name="Pavan W.J."/>
            <person name="Pavesi G."/>
            <person name="Pesole G."/>
            <person name="Petrovsky N."/>
            <person name="Piazza S."/>
            <person name="Reed J."/>
            <person name="Reid J.F."/>
            <person name="Ring B.Z."/>
            <person name="Ringwald M."/>
            <person name="Rost B."/>
            <person name="Ruan Y."/>
            <person name="Salzberg S.L."/>
            <person name="Sandelin A."/>
            <person name="Schneider C."/>
            <person name="Schoenbach C."/>
            <person name="Sekiguchi K."/>
            <person name="Semple C.A."/>
            <person name="Seno S."/>
            <person name="Sessa L."/>
            <person name="Sheng Y."/>
            <person name="Shibata Y."/>
            <person name="Shimada H."/>
            <person name="Shimada K."/>
            <person name="Silva D."/>
            <person name="Sinclair B."/>
            <person name="Sperling S."/>
            <person name="Stupka E."/>
            <person name="Sugiura K."/>
            <person name="Sultana R."/>
            <person name="Takenaka Y."/>
            <person name="Taki K."/>
            <person name="Tammoja K."/>
            <person name="Tan S.L."/>
            <person name="Tang S."/>
            <person name="Taylor M.S."/>
            <person name="Tegner J."/>
            <person name="Teichmann S.A."/>
            <person name="Ueda H.R."/>
            <person name="van Nimwegen E."/>
            <person name="Verardo R."/>
            <person name="Wei C.L."/>
            <person name="Yagi K."/>
            <person name="Yamanishi H."/>
            <person name="Zabarovsky E."/>
            <person name="Zhu S."/>
            <person name="Zimmer A."/>
            <person name="Hide W."/>
            <person name="Bult C."/>
            <person name="Grimmond S.M."/>
            <person name="Teasdale R.D."/>
            <person name="Liu E.T."/>
            <person name="Brusic V."/>
            <person name="Quackenbush J."/>
            <person name="Wahlestedt C."/>
            <person name="Mattick J.S."/>
            <person name="Hume D.A."/>
            <person name="Kai C."/>
            <person name="Sasaki D."/>
            <person name="Tomaru Y."/>
            <person name="Fukuda S."/>
            <person name="Kanamori-Katayama M."/>
            <person name="Suzuki M."/>
            <person name="Aoki J."/>
            <person name="Arakawa T."/>
            <person name="Iida J."/>
            <person name="Imamura K."/>
            <person name="Itoh M."/>
            <person name="Kato T."/>
            <person name="Kawaji H."/>
            <person name="Kawagashira N."/>
            <person name="Kawashima T."/>
            <person name="Kojima M."/>
            <person name="Kondo S."/>
            <person name="Konno H."/>
            <person name="Nakano K."/>
            <person name="Ninomiya N."/>
            <person name="Nishio T."/>
            <person name="Okada M."/>
            <person name="Plessy C."/>
            <person name="Shibata K."/>
            <person name="Shiraki T."/>
            <person name="Suzuki S."/>
            <person name="Tagami M."/>
            <person name="Waki K."/>
            <person name="Watahiki A."/>
            <person name="Okamura-Oho Y."/>
            <person name="Suzuki H."/>
            <person name="Kawai J."/>
            <person name="Hayashizaki Y."/>
        </authorList>
    </citation>
    <scope>NUCLEOTIDE SEQUENCE [LARGE SCALE MRNA] (ISOFORMS 1 AND 2)</scope>
    <source>
        <strain>C57BL/6J</strain>
        <tissue>Cerebellum</tissue>
        <tissue>Head</tissue>
        <tissue>Spinal ganglion</tissue>
    </source>
</reference>
<reference key="2">
    <citation type="journal article" date="2004" name="Genome Res.">
        <title>The status, quality, and expansion of the NIH full-length cDNA project: the Mammalian Gene Collection (MGC).</title>
        <authorList>
            <consortium name="The MGC Project Team"/>
        </authorList>
    </citation>
    <scope>NUCLEOTIDE SEQUENCE [LARGE SCALE MRNA] (ISOFORM 1)</scope>
    <source>
        <strain>C57BL/6J</strain>
        <tissue>Brain</tissue>
    </source>
</reference>
<proteinExistence type="evidence at transcript level"/>
<name>TIGD5_MOUSE</name>
<dbReference type="EMBL" id="AK051177">
    <property type="protein sequence ID" value="BAC34547.1"/>
    <property type="molecule type" value="mRNA"/>
</dbReference>
<dbReference type="EMBL" id="AK086663">
    <property type="protein sequence ID" value="BAC39713.1"/>
    <property type="status" value="ALT_FRAME"/>
    <property type="molecule type" value="mRNA"/>
</dbReference>
<dbReference type="EMBL" id="AK036241">
    <property type="protein sequence ID" value="BAC29359.1"/>
    <property type="status" value="ALT_FRAME"/>
    <property type="molecule type" value="mRNA"/>
</dbReference>
<dbReference type="EMBL" id="BC099838">
    <property type="protein sequence ID" value="AAH99838.1"/>
    <property type="molecule type" value="mRNA"/>
</dbReference>
<dbReference type="EMBL" id="BC138289">
    <property type="protein sequence ID" value="AAI38290.1"/>
    <property type="molecule type" value="mRNA"/>
</dbReference>
<dbReference type="CCDS" id="CCDS79379.1">
    <molecule id="Q499M4-1"/>
</dbReference>
<dbReference type="RefSeq" id="NP_848761.2">
    <molecule id="Q499M4-1"/>
    <property type="nucleotide sequence ID" value="NM_178646.4"/>
</dbReference>
<dbReference type="SMR" id="Q499M4"/>
<dbReference type="FunCoup" id="Q499M4">
    <property type="interactions" value="650"/>
</dbReference>
<dbReference type="STRING" id="10090.ENSMUSP00000141473"/>
<dbReference type="iPTMnet" id="Q499M4"/>
<dbReference type="PhosphoSitePlus" id="Q499M4"/>
<dbReference type="PeptideAtlas" id="Q499M4"/>
<dbReference type="ProteomicsDB" id="259447">
    <molecule id="Q499M4-1"/>
</dbReference>
<dbReference type="ProteomicsDB" id="259448">
    <molecule id="Q499M4-2"/>
</dbReference>
<dbReference type="Antibodypedia" id="43484">
    <property type="antibodies" value="35 antibodies from 14 providers"/>
</dbReference>
<dbReference type="DNASU" id="105734"/>
<dbReference type="Ensembl" id="ENSMUST00000192937.2">
    <molecule id="Q499M4-1"/>
    <property type="protein sequence ID" value="ENSMUSP00000141473.2"/>
    <property type="gene ID" value="ENSMUSG00000103906.2"/>
</dbReference>
<dbReference type="GeneID" id="105734"/>
<dbReference type="KEGG" id="mmu:105734"/>
<dbReference type="UCSC" id="uc007whp.1">
    <molecule id="Q499M4-1"/>
    <property type="organism name" value="mouse"/>
</dbReference>
<dbReference type="AGR" id="MGI:2145902"/>
<dbReference type="CTD" id="84948"/>
<dbReference type="MGI" id="MGI:2145902">
    <property type="gene designation" value="Tigd5"/>
</dbReference>
<dbReference type="VEuPathDB" id="HostDB:ENSMUSG00000103906"/>
<dbReference type="GeneTree" id="ENSGT00940000154420"/>
<dbReference type="HOGENOM" id="CLU_018294_1_1_1"/>
<dbReference type="InParanoid" id="Q499M4"/>
<dbReference type="OMA" id="AYKCLAP"/>
<dbReference type="OrthoDB" id="5919228at2759"/>
<dbReference type="BioGRID-ORCS" id="105734">
    <property type="hits" value="2 hits in 67 CRISPR screens"/>
</dbReference>
<dbReference type="PRO" id="PR:Q499M4"/>
<dbReference type="Proteomes" id="UP000000589">
    <property type="component" value="Chromosome 15"/>
</dbReference>
<dbReference type="RNAct" id="Q499M4">
    <property type="molecule type" value="protein"/>
</dbReference>
<dbReference type="Bgee" id="ENSMUSG00000103906">
    <property type="expression patterns" value="Expressed in femorotibial joint and 239 other cell types or tissues"/>
</dbReference>
<dbReference type="GO" id="GO:0005634">
    <property type="term" value="C:nucleus"/>
    <property type="evidence" value="ECO:0007669"/>
    <property type="project" value="UniProtKB-SubCell"/>
</dbReference>
<dbReference type="GO" id="GO:0003677">
    <property type="term" value="F:DNA binding"/>
    <property type="evidence" value="ECO:0007669"/>
    <property type="project" value="UniProtKB-KW"/>
</dbReference>
<dbReference type="FunFam" id="1.10.10.10:FF:000293">
    <property type="entry name" value="Tigger transposable element-derived protein 5"/>
    <property type="match status" value="1"/>
</dbReference>
<dbReference type="Gene3D" id="1.10.10.60">
    <property type="entry name" value="Homeodomain-like"/>
    <property type="match status" value="1"/>
</dbReference>
<dbReference type="Gene3D" id="1.10.10.10">
    <property type="entry name" value="Winged helix-like DNA-binding domain superfamily/Winged helix DNA-binding domain"/>
    <property type="match status" value="1"/>
</dbReference>
<dbReference type="InterPro" id="IPR050863">
    <property type="entry name" value="CenT-Element_Derived"/>
</dbReference>
<dbReference type="InterPro" id="IPR004875">
    <property type="entry name" value="DDE_SF_endonuclease_dom"/>
</dbReference>
<dbReference type="InterPro" id="IPR009057">
    <property type="entry name" value="Homeodomain-like_sf"/>
</dbReference>
<dbReference type="InterPro" id="IPR006600">
    <property type="entry name" value="HTH_CenpB_DNA-bd_dom"/>
</dbReference>
<dbReference type="InterPro" id="IPR007889">
    <property type="entry name" value="HTH_Psq"/>
</dbReference>
<dbReference type="InterPro" id="IPR036388">
    <property type="entry name" value="WH-like_DNA-bd_sf"/>
</dbReference>
<dbReference type="PANTHER" id="PTHR19303:SF56">
    <property type="entry name" value="TIGGER TRANSPOSABLE ELEMENT-DERIVED PROTEIN 5"/>
    <property type="match status" value="1"/>
</dbReference>
<dbReference type="PANTHER" id="PTHR19303">
    <property type="entry name" value="TRANSPOSON"/>
    <property type="match status" value="1"/>
</dbReference>
<dbReference type="Pfam" id="PF04218">
    <property type="entry name" value="CENP-B_N"/>
    <property type="match status" value="1"/>
</dbReference>
<dbReference type="Pfam" id="PF03184">
    <property type="entry name" value="DDE_1"/>
    <property type="match status" value="1"/>
</dbReference>
<dbReference type="Pfam" id="PF03221">
    <property type="entry name" value="HTH_Tnp_Tc5"/>
    <property type="match status" value="1"/>
</dbReference>
<dbReference type="SMART" id="SM00674">
    <property type="entry name" value="CENPB"/>
    <property type="match status" value="1"/>
</dbReference>
<dbReference type="SUPFAM" id="SSF46689">
    <property type="entry name" value="Homeodomain-like"/>
    <property type="match status" value="2"/>
</dbReference>
<dbReference type="PROSITE" id="PS51253">
    <property type="entry name" value="HTH_CENPB"/>
    <property type="match status" value="1"/>
</dbReference>
<dbReference type="PROSITE" id="PS50960">
    <property type="entry name" value="HTH_PSQ"/>
    <property type="match status" value="1"/>
</dbReference>